<dbReference type="EMBL" id="MN146033">
    <property type="protein sequence ID" value="QGA30886.1"/>
    <property type="molecule type" value="Genomic_DNA"/>
</dbReference>
<dbReference type="SMR" id="A0A5Q0QMX6"/>
<dbReference type="GO" id="GO:0046872">
    <property type="term" value="F:metal ion binding"/>
    <property type="evidence" value="ECO:0007669"/>
    <property type="project" value="UniProtKB-KW"/>
</dbReference>
<dbReference type="Gene3D" id="1.10.600.10">
    <property type="entry name" value="Farnesyl Diphosphate Synthase"/>
    <property type="match status" value="2"/>
</dbReference>
<dbReference type="InterPro" id="IPR008949">
    <property type="entry name" value="Isoprenoid_synthase_dom_sf"/>
</dbReference>
<dbReference type="SUPFAM" id="SSF48576">
    <property type="entry name" value="Terpenoid synthases"/>
    <property type="match status" value="1"/>
</dbReference>
<feature type="chain" id="PRO_0000451264" description="Sesquiterpene synthase-like protein Agr10">
    <location>
        <begin position="1"/>
        <end position="307"/>
    </location>
</feature>
<feature type="region of interest" description="Disordered" evidence="1">
    <location>
        <begin position="287"/>
        <end position="307"/>
    </location>
</feature>
<feature type="compositionally biased region" description="Polar residues" evidence="1">
    <location>
        <begin position="296"/>
        <end position="307"/>
    </location>
</feature>
<name>AGR10_CYCAE</name>
<keyword id="KW-0460">Magnesium</keyword>
<keyword id="KW-0479">Metal-binding</keyword>
<protein>
    <recommendedName>
        <fullName evidence="3">Sesquiterpene synthase-like protein Agr10</fullName>
    </recommendedName>
</protein>
<comment type="similarity">
    <text evidence="4">Belongs to the terpene synthase family.</text>
</comment>
<comment type="caution">
    <text evidence="2">Does not function as a sesquiterpene synthase since it does not contain a functional DDXXD metal-binding motif.</text>
</comment>
<gene>
    <name evidence="3" type="primary">Agr10</name>
</gene>
<reference key="1">
    <citation type="journal article" date="2020" name="ACS Chem. Biol.">
        <title>Agrocybe aegerita serves as a gateway for identifying sesquiterpene biosynthetic enzymes in higher fungi.</title>
        <authorList>
            <person name="Zhang C."/>
            <person name="Chen X."/>
            <person name="Orban A."/>
            <person name="Shukal S."/>
            <person name="Birk F."/>
            <person name="Too H.P."/>
            <person name="Ruehl M."/>
        </authorList>
    </citation>
    <scope>NUCLEOTIDE SEQUENCE [GENOMIC DNA]</scope>
    <scope>IDENTIFICATION</scope>
    <source>
        <strain>AAE3_05024</strain>
    </source>
</reference>
<reference key="2">
    <citation type="journal article" date="2018" name="BMC Genomics">
        <title>The genome sequence of the commercially cultivated mushroom Agrocybe aegerita reveals a conserved repertoire of fruiting-related genes and a versatile suite of biopolymer-degrading enzymes.</title>
        <authorList>
            <person name="Gupta D.K."/>
            <person name="Ruehl M."/>
            <person name="Mishra B."/>
            <person name="Kleofas V."/>
            <person name="Hofrichter M."/>
            <person name="Herzog R."/>
            <person name="Pecyna M.J."/>
            <person name="Sharma R."/>
            <person name="Kellner H."/>
            <person name="Hennicke F."/>
            <person name="Thines M."/>
        </authorList>
    </citation>
    <scope>NUCLEOTIDE SEQUENCE [LARGE SCALE GENOMIC DNA]</scope>
    <source>
        <strain>AAE3_05024</strain>
    </source>
</reference>
<evidence type="ECO:0000256" key="1">
    <source>
        <dbReference type="SAM" id="MobiDB-lite"/>
    </source>
</evidence>
<evidence type="ECO:0000269" key="2">
    <source>
    </source>
</evidence>
<evidence type="ECO:0000303" key="3">
    <source>
    </source>
</evidence>
<evidence type="ECO:0000305" key="4"/>
<accession>A0A5Q0QMX6</accession>
<proteinExistence type="inferred from homology"/>
<sequence>MSLNFFLRRYTVFPWSRKLGQYYHDAKRESSAWTESFHPFDEDLSKAALTFCITALLASLAYFLRQKEIVRLGCDLMNIFYVFDECADIADKEGASQIRDVVMDDLHRPEKTCPGGEILPGEMVKYVLLLCPEIPETYYNTKSFGFAPQSSSPQPHIVCATLSRISMPTQQQWFNVKRTIGPNVFLARSATVLPYAETHTFYHPRMIALREQAPFLDINSYPMKVRGLVQGSINWLEGYAAGVQAAFLDNIANLPSCAKEVESRVNIYVNELAQWARGNDDWTFESGRYFGDRGPENQSDIPTSSNR</sequence>
<organism>
    <name type="scientific">Cyclocybe aegerita</name>
    <name type="common">Black poplar mushroom</name>
    <name type="synonym">Agrocybe aegerita</name>
    <dbReference type="NCBI Taxonomy" id="1973307"/>
    <lineage>
        <taxon>Eukaryota</taxon>
        <taxon>Fungi</taxon>
        <taxon>Dikarya</taxon>
        <taxon>Basidiomycota</taxon>
        <taxon>Agaricomycotina</taxon>
        <taxon>Agaricomycetes</taxon>
        <taxon>Agaricomycetidae</taxon>
        <taxon>Agaricales</taxon>
        <taxon>Agaricineae</taxon>
        <taxon>Bolbitiaceae</taxon>
        <taxon>Cyclocybe</taxon>
    </lineage>
</organism>